<sequence length="174" mass="18649">MRVSVFAVGRMKSGPERELVERYFDRFAKAGPPLGLEFAGVSEIPESRGQTAQLRKAEEAQRIHEALDNAKSGGAKSGGTSSGGAALILLDERGKTLGSEAFAAIVGRMRDDGKRQLIVAIGGPDGHDPALRSRADLVLALGELTWPHQIARILIAEQLYRAATILAGHPYHRS</sequence>
<proteinExistence type="inferred from homology"/>
<gene>
    <name evidence="1" type="primary">rlmH</name>
    <name type="ordered locus">BMEI0211</name>
</gene>
<comment type="function">
    <text evidence="1">Specifically methylates the pseudouridine at position 1915 (m3Psi1915) in 23S rRNA.</text>
</comment>
<comment type="catalytic activity">
    <reaction evidence="1">
        <text>pseudouridine(1915) in 23S rRNA + S-adenosyl-L-methionine = N(3)-methylpseudouridine(1915) in 23S rRNA + S-adenosyl-L-homocysteine + H(+)</text>
        <dbReference type="Rhea" id="RHEA:42752"/>
        <dbReference type="Rhea" id="RHEA-COMP:10221"/>
        <dbReference type="Rhea" id="RHEA-COMP:10222"/>
        <dbReference type="ChEBI" id="CHEBI:15378"/>
        <dbReference type="ChEBI" id="CHEBI:57856"/>
        <dbReference type="ChEBI" id="CHEBI:59789"/>
        <dbReference type="ChEBI" id="CHEBI:65314"/>
        <dbReference type="ChEBI" id="CHEBI:74486"/>
        <dbReference type="EC" id="2.1.1.177"/>
    </reaction>
</comment>
<comment type="subunit">
    <text evidence="1">Homodimer.</text>
</comment>
<comment type="subcellular location">
    <subcellularLocation>
        <location evidence="1">Cytoplasm</location>
    </subcellularLocation>
</comment>
<comment type="similarity">
    <text evidence="1">Belongs to the RNA methyltransferase RlmH family.</text>
</comment>
<accession>P67516</accession>
<accession>Q8FYM5</accession>
<accession>Q8YJ75</accession>
<feature type="chain" id="PRO_0000198102" description="Ribosomal RNA large subunit methyltransferase H">
    <location>
        <begin position="1"/>
        <end position="174"/>
    </location>
</feature>
<feature type="binding site" evidence="1">
    <location>
        <position position="90"/>
    </location>
    <ligand>
        <name>S-adenosyl-L-methionine</name>
        <dbReference type="ChEBI" id="CHEBI:59789"/>
    </ligand>
</feature>
<feature type="binding site" evidence="1">
    <location>
        <position position="122"/>
    </location>
    <ligand>
        <name>S-adenosyl-L-methionine</name>
        <dbReference type="ChEBI" id="CHEBI:59789"/>
    </ligand>
</feature>
<feature type="binding site" evidence="1">
    <location>
        <begin position="141"/>
        <end position="146"/>
    </location>
    <ligand>
        <name>S-adenosyl-L-methionine</name>
        <dbReference type="ChEBI" id="CHEBI:59789"/>
    </ligand>
</feature>
<organism>
    <name type="scientific">Brucella melitensis biotype 1 (strain ATCC 23456 / CCUG 17765 / NCTC 10094 / 16M)</name>
    <dbReference type="NCBI Taxonomy" id="224914"/>
    <lineage>
        <taxon>Bacteria</taxon>
        <taxon>Pseudomonadati</taxon>
        <taxon>Pseudomonadota</taxon>
        <taxon>Alphaproteobacteria</taxon>
        <taxon>Hyphomicrobiales</taxon>
        <taxon>Brucellaceae</taxon>
        <taxon>Brucella/Ochrobactrum group</taxon>
        <taxon>Brucella</taxon>
    </lineage>
</organism>
<evidence type="ECO:0000255" key="1">
    <source>
        <dbReference type="HAMAP-Rule" id="MF_00658"/>
    </source>
</evidence>
<dbReference type="EC" id="2.1.1.177" evidence="1"/>
<dbReference type="EMBL" id="AE008917">
    <property type="protein sequence ID" value="AAL51393.1"/>
    <property type="molecule type" value="Genomic_DNA"/>
</dbReference>
<dbReference type="PIR" id="AF3278">
    <property type="entry name" value="AF3278"/>
</dbReference>
<dbReference type="RefSeq" id="WP_004684318.1">
    <property type="nucleotide sequence ID" value="NZ_GG703781.1"/>
</dbReference>
<dbReference type="SMR" id="P67516"/>
<dbReference type="GeneID" id="97533039"/>
<dbReference type="KEGG" id="bme:BMEI0211"/>
<dbReference type="KEGG" id="bmel:DK63_1219"/>
<dbReference type="PATRIC" id="fig|224914.52.peg.1290"/>
<dbReference type="eggNOG" id="COG1576">
    <property type="taxonomic scope" value="Bacteria"/>
</dbReference>
<dbReference type="PhylomeDB" id="P67516"/>
<dbReference type="Proteomes" id="UP000000419">
    <property type="component" value="Chromosome I"/>
</dbReference>
<dbReference type="GO" id="GO:0005737">
    <property type="term" value="C:cytoplasm"/>
    <property type="evidence" value="ECO:0007669"/>
    <property type="project" value="UniProtKB-SubCell"/>
</dbReference>
<dbReference type="GO" id="GO:0070038">
    <property type="term" value="F:rRNA (pseudouridine-N3-)-methyltransferase activity"/>
    <property type="evidence" value="ECO:0007669"/>
    <property type="project" value="UniProtKB-UniRule"/>
</dbReference>
<dbReference type="CDD" id="cd18081">
    <property type="entry name" value="RlmH-like"/>
    <property type="match status" value="1"/>
</dbReference>
<dbReference type="Gene3D" id="3.40.1280.10">
    <property type="match status" value="1"/>
</dbReference>
<dbReference type="HAMAP" id="MF_00658">
    <property type="entry name" value="23SrRNA_methyltr_H"/>
    <property type="match status" value="1"/>
</dbReference>
<dbReference type="InterPro" id="IPR029028">
    <property type="entry name" value="Alpha/beta_knot_MTases"/>
</dbReference>
<dbReference type="InterPro" id="IPR003742">
    <property type="entry name" value="RlmH-like"/>
</dbReference>
<dbReference type="InterPro" id="IPR029026">
    <property type="entry name" value="tRNA_m1G_MTases_N"/>
</dbReference>
<dbReference type="NCBIfam" id="NF000989">
    <property type="entry name" value="PRK00103.2-3"/>
    <property type="match status" value="1"/>
</dbReference>
<dbReference type="PANTHER" id="PTHR33603">
    <property type="entry name" value="METHYLTRANSFERASE"/>
    <property type="match status" value="1"/>
</dbReference>
<dbReference type="PANTHER" id="PTHR33603:SF1">
    <property type="entry name" value="RIBOSOMAL RNA LARGE SUBUNIT METHYLTRANSFERASE H"/>
    <property type="match status" value="1"/>
</dbReference>
<dbReference type="Pfam" id="PF02590">
    <property type="entry name" value="SPOUT_MTase"/>
    <property type="match status" value="1"/>
</dbReference>
<dbReference type="PIRSF" id="PIRSF004505">
    <property type="entry name" value="MT_bac"/>
    <property type="match status" value="1"/>
</dbReference>
<dbReference type="SUPFAM" id="SSF75217">
    <property type="entry name" value="alpha/beta knot"/>
    <property type="match status" value="1"/>
</dbReference>
<keyword id="KW-0963">Cytoplasm</keyword>
<keyword id="KW-0489">Methyltransferase</keyword>
<keyword id="KW-0698">rRNA processing</keyword>
<keyword id="KW-0949">S-adenosyl-L-methionine</keyword>
<keyword id="KW-0808">Transferase</keyword>
<name>RLMH_BRUME</name>
<reference key="1">
    <citation type="journal article" date="2002" name="Proc. Natl. Acad. Sci. U.S.A.">
        <title>The genome sequence of the facultative intracellular pathogen Brucella melitensis.</title>
        <authorList>
            <person name="DelVecchio V.G."/>
            <person name="Kapatral V."/>
            <person name="Redkar R.J."/>
            <person name="Patra G."/>
            <person name="Mujer C."/>
            <person name="Los T."/>
            <person name="Ivanova N."/>
            <person name="Anderson I."/>
            <person name="Bhattacharyya A."/>
            <person name="Lykidis A."/>
            <person name="Reznik G."/>
            <person name="Jablonski L."/>
            <person name="Larsen N."/>
            <person name="D'Souza M."/>
            <person name="Bernal A."/>
            <person name="Mazur M."/>
            <person name="Goltsman E."/>
            <person name="Selkov E."/>
            <person name="Elzer P.H."/>
            <person name="Hagius S."/>
            <person name="O'Callaghan D."/>
            <person name="Letesson J.-J."/>
            <person name="Haselkorn R."/>
            <person name="Kyrpides N.C."/>
            <person name="Overbeek R."/>
        </authorList>
    </citation>
    <scope>NUCLEOTIDE SEQUENCE [LARGE SCALE GENOMIC DNA]</scope>
    <source>
        <strain>ATCC 23456 / CCUG 17765 / NCTC 10094 / 16M</strain>
    </source>
</reference>
<protein>
    <recommendedName>
        <fullName evidence="1">Ribosomal RNA large subunit methyltransferase H</fullName>
        <ecNumber evidence="1">2.1.1.177</ecNumber>
    </recommendedName>
    <alternativeName>
        <fullName evidence="1">23S rRNA (pseudouridine1915-N3)-methyltransferase</fullName>
    </alternativeName>
    <alternativeName>
        <fullName evidence="1">23S rRNA m3Psi1915 methyltransferase</fullName>
    </alternativeName>
    <alternativeName>
        <fullName evidence="1">rRNA (pseudouridine-N3-)-methyltransferase RlmH</fullName>
    </alternativeName>
</protein>